<dbReference type="EC" id="3.2.1.18" evidence="1"/>
<dbReference type="EMBL" id="AY207550">
    <property type="protein sequence ID" value="AAO62064.1"/>
    <property type="molecule type" value="Genomic_DNA"/>
</dbReference>
<dbReference type="SMR" id="Q6XV26"/>
<dbReference type="CAZy" id="GH34">
    <property type="family name" value="Glycoside Hydrolase Family 34"/>
</dbReference>
<dbReference type="GlyCosmos" id="Q6XV26">
    <property type="glycosylation" value="9 sites, No reported glycans"/>
</dbReference>
<dbReference type="GO" id="GO:0020002">
    <property type="term" value="C:host cell plasma membrane"/>
    <property type="evidence" value="ECO:0007669"/>
    <property type="project" value="UniProtKB-SubCell"/>
</dbReference>
<dbReference type="GO" id="GO:0016020">
    <property type="term" value="C:membrane"/>
    <property type="evidence" value="ECO:0007669"/>
    <property type="project" value="UniProtKB-UniRule"/>
</dbReference>
<dbReference type="GO" id="GO:0055036">
    <property type="term" value="C:virion membrane"/>
    <property type="evidence" value="ECO:0007669"/>
    <property type="project" value="UniProtKB-SubCell"/>
</dbReference>
<dbReference type="GO" id="GO:0004308">
    <property type="term" value="F:exo-alpha-sialidase activity"/>
    <property type="evidence" value="ECO:0007669"/>
    <property type="project" value="UniProtKB-UniRule"/>
</dbReference>
<dbReference type="GO" id="GO:0046872">
    <property type="term" value="F:metal ion binding"/>
    <property type="evidence" value="ECO:0007669"/>
    <property type="project" value="UniProtKB-UniRule"/>
</dbReference>
<dbReference type="GO" id="GO:0005975">
    <property type="term" value="P:carbohydrate metabolic process"/>
    <property type="evidence" value="ECO:0007669"/>
    <property type="project" value="InterPro"/>
</dbReference>
<dbReference type="GO" id="GO:0046761">
    <property type="term" value="P:viral budding from plasma membrane"/>
    <property type="evidence" value="ECO:0007669"/>
    <property type="project" value="UniProtKB-UniRule"/>
</dbReference>
<dbReference type="Gene3D" id="2.120.10.10">
    <property type="match status" value="1"/>
</dbReference>
<dbReference type="HAMAP" id="MF_04071">
    <property type="entry name" value="INFV_NRAM"/>
    <property type="match status" value="1"/>
</dbReference>
<dbReference type="InterPro" id="IPR001860">
    <property type="entry name" value="Glyco_hydro_34"/>
</dbReference>
<dbReference type="InterPro" id="IPR036278">
    <property type="entry name" value="Sialidase_sf"/>
</dbReference>
<dbReference type="Pfam" id="PF00064">
    <property type="entry name" value="Neur"/>
    <property type="match status" value="1"/>
</dbReference>
<dbReference type="SUPFAM" id="SSF50939">
    <property type="entry name" value="Sialidases"/>
    <property type="match status" value="1"/>
</dbReference>
<protein>
    <recommendedName>
        <fullName evidence="1">Neuraminidase</fullName>
        <ecNumber evidence="1">3.2.1.18</ecNumber>
    </recommendedName>
</protein>
<evidence type="ECO:0000255" key="1">
    <source>
        <dbReference type="HAMAP-Rule" id="MF_04071"/>
    </source>
</evidence>
<feature type="chain" id="PRO_0000280128" description="Neuraminidase">
    <location>
        <begin position="1"/>
        <end position="470"/>
    </location>
</feature>
<feature type="topological domain" description="Intravirion" evidence="1">
    <location>
        <begin position="1"/>
        <end position="6"/>
    </location>
</feature>
<feature type="transmembrane region" description="Helical" evidence="1">
    <location>
        <begin position="7"/>
        <end position="27"/>
    </location>
</feature>
<feature type="topological domain" description="Virion surface" evidence="1">
    <location>
        <begin position="28"/>
        <end position="470"/>
    </location>
</feature>
<feature type="region of interest" description="Involved in apical transport and lipid raft association" evidence="1">
    <location>
        <begin position="11"/>
        <end position="33"/>
    </location>
</feature>
<feature type="region of interest" description="Hypervariable stalk region" evidence="1">
    <location>
        <begin position="36"/>
        <end position="88"/>
    </location>
</feature>
<feature type="region of interest" description="Head of neuraminidase" evidence="1">
    <location>
        <begin position="91"/>
        <end position="470"/>
    </location>
</feature>
<feature type="active site" description="Proton donor/acceptor" evidence="1">
    <location>
        <position position="151"/>
    </location>
</feature>
<feature type="active site" description="Nucleophile" evidence="1">
    <location>
        <position position="406"/>
    </location>
</feature>
<feature type="binding site" evidence="1">
    <location>
        <position position="118"/>
    </location>
    <ligand>
        <name>substrate</name>
    </ligand>
</feature>
<feature type="binding site" evidence="1">
    <location>
        <position position="152"/>
    </location>
    <ligand>
        <name>substrate</name>
    </ligand>
</feature>
<feature type="binding site" evidence="1">
    <location>
        <begin position="277"/>
        <end position="278"/>
    </location>
    <ligand>
        <name>substrate</name>
    </ligand>
</feature>
<feature type="binding site" evidence="1">
    <location>
        <position position="293"/>
    </location>
    <ligand>
        <name>substrate</name>
    </ligand>
</feature>
<feature type="binding site" evidence="1">
    <location>
        <position position="294"/>
    </location>
    <ligand>
        <name>Ca(2+)</name>
        <dbReference type="ChEBI" id="CHEBI:29108"/>
    </ligand>
</feature>
<feature type="binding site" evidence="1">
    <location>
        <position position="298"/>
    </location>
    <ligand>
        <name>Ca(2+)</name>
        <dbReference type="ChEBI" id="CHEBI:29108"/>
    </ligand>
</feature>
<feature type="binding site" evidence="1">
    <location>
        <position position="325"/>
    </location>
    <ligand>
        <name>Ca(2+)</name>
        <dbReference type="ChEBI" id="CHEBI:29108"/>
    </ligand>
</feature>
<feature type="binding site" evidence="1">
    <location>
        <position position="372"/>
    </location>
    <ligand>
        <name>substrate</name>
    </ligand>
</feature>
<feature type="glycosylation site" description="N-linked (GlcNAc...) asparagine; by host" evidence="1">
    <location>
        <position position="51"/>
    </location>
</feature>
<feature type="glycosylation site" description="N-linked (GlcNAc...) asparagine; by host" evidence="1">
    <location>
        <position position="54"/>
    </location>
</feature>
<feature type="glycosylation site" description="N-linked (GlcNAc...) asparagine; by host" evidence="1">
    <location>
        <position position="62"/>
    </location>
</feature>
<feature type="glycosylation site" description="N-linked (GlcNAc...) asparagine; by host" evidence="1">
    <location>
        <position position="67"/>
    </location>
</feature>
<feature type="glycosylation site" description="N-linked (GlcNAc...) asparagine; by host" evidence="1">
    <location>
        <position position="70"/>
    </location>
</feature>
<feature type="glycosylation site" description="N-linked (GlcNAc...) asparagine; by host" evidence="1">
    <location>
        <position position="86"/>
    </location>
</feature>
<feature type="glycosylation site" description="N-linked (GlcNAc...) asparagine; by host" evidence="1">
    <location>
        <position position="146"/>
    </location>
</feature>
<feature type="glycosylation site" description="N-linked (GlcNAc...) asparagine; by host" evidence="1">
    <location>
        <position position="201"/>
    </location>
</feature>
<feature type="glycosylation site" description="N-linked (GlcNAc...) asparagine; by host" evidence="1">
    <location>
        <position position="402"/>
    </location>
</feature>
<feature type="disulfide bond" evidence="1">
    <location>
        <begin position="92"/>
        <end position="419"/>
    </location>
</feature>
<feature type="disulfide bond" evidence="1">
    <location>
        <begin position="124"/>
        <end position="129"/>
    </location>
</feature>
<feature type="disulfide bond" evidence="1">
    <location>
        <begin position="184"/>
        <end position="231"/>
    </location>
</feature>
<feature type="disulfide bond" evidence="1">
    <location>
        <begin position="233"/>
        <end position="238"/>
    </location>
</feature>
<feature type="disulfide bond" evidence="1">
    <location>
        <begin position="279"/>
        <end position="292"/>
    </location>
</feature>
<feature type="disulfide bond" evidence="1">
    <location>
        <begin position="281"/>
        <end position="290"/>
    </location>
</feature>
<feature type="disulfide bond" evidence="1">
    <location>
        <begin position="319"/>
        <end position="337"/>
    </location>
</feature>
<feature type="disulfide bond" evidence="1">
    <location>
        <begin position="423"/>
        <end position="449"/>
    </location>
</feature>
<keyword id="KW-0106">Calcium</keyword>
<keyword id="KW-1015">Disulfide bond</keyword>
<keyword id="KW-0325">Glycoprotein</keyword>
<keyword id="KW-0326">Glycosidase</keyword>
<keyword id="KW-1032">Host cell membrane</keyword>
<keyword id="KW-1043">Host membrane</keyword>
<keyword id="KW-0378">Hydrolase</keyword>
<keyword id="KW-0472">Membrane</keyword>
<keyword id="KW-0479">Metal-binding</keyword>
<keyword id="KW-0735">Signal-anchor</keyword>
<keyword id="KW-0812">Transmembrane</keyword>
<keyword id="KW-1133">Transmembrane helix</keyword>
<keyword id="KW-0946">Virion</keyword>
<reference key="1">
    <citation type="submission" date="2002-12" db="EMBL/GenBank/DDBJ databases">
        <title>Genetic analysis of multiple N3, N4, and N6 influenza A virus neuraminidase genes.</title>
        <authorList>
            <person name="Webby R.J."/>
            <person name="Humberd J.L."/>
            <person name="Krauss S.L."/>
        </authorList>
    </citation>
    <scope>NUCLEOTIDE SEQUENCE [GENOMIC RNA]</scope>
</reference>
<reference key="2">
    <citation type="journal article" date="2004" name="Virus Res.">
        <title>Assembly and budding of influenza virus.</title>
        <authorList>
            <person name="Nayak D.P."/>
            <person name="Hui E.K."/>
            <person name="Barman S."/>
        </authorList>
    </citation>
    <scope>REVIEW</scope>
</reference>
<reference key="3">
    <citation type="journal article" date="2005" name="N. Engl. J. Med.">
        <title>Neuraminidase inhibitors for influenza.</title>
        <authorList>
            <person name="Moscona A."/>
        </authorList>
    </citation>
    <scope>REVIEW</scope>
</reference>
<reference key="4">
    <citation type="journal article" date="2005" name="Biol. Pharm. Bull.">
        <title>Sialobiology of influenza: molecular mechanism of host range variation of influenza viruses.</title>
        <authorList>
            <person name="Suzuki Y."/>
        </authorList>
    </citation>
    <scope>REVIEW</scope>
</reference>
<accession>Q6XV26</accession>
<sequence>MNPNQKIICISATGMTLSVVSLLIGIANLGLNIGLHYKVGDTPGVNVPNENGTNSTTTIINNNTQNNFTNITNIIQTKTEEKTFLNLTKPLCEVNSWHILSKDNAIRIGEDAHILVTREPYLSCGPQGCRMFALSQGTTLRGRHANGTIHDRSPYRALISWEMGQAPSPYNTRVECIGWSSTSCHDGKSRMSICMSGPNNNASAVVWYGGRPATEIPSWAGNILRTQESECVCHNGVCPVVMTDGPANNRAATKIIYFKEGKIQKIEELTGSAQHIEECSCYGAKSVIKCICRDNWKGANRPVITIDPEMMTHTSKYLCSKILTDTSRPNDPIDGDCDAPITGGSPDPGVKGFAFLDGDNSWLGRTISKDSRSGYEMLKVPNAETSTQSGPVSHQVIVNNQNWSGYSGAFIDYWSNKECFNPCFYVELIRGRPKESSVLWTSNSIVALCGSKERLGSWSWHDGAEIIYFK</sequence>
<comment type="function">
    <text evidence="1">Catalyzes the removal of terminal sialic acid residues from viral and cellular glycoconjugates. Cleaves off the terminal sialic acids on the glycosylated HA during virus budding to facilitate virus release. Additionally helps virus spread through the circulation by further removing sialic acids from the cell surface. These cleavages prevent self-aggregation and ensure the efficient spread of the progeny virus from cell to cell. Otherwise, infection would be limited to one round of replication. Described as a receptor-destroying enzyme because it cleaves a terminal sialic acid from the cellular receptors. May facilitate viral invasion of the upper airways by cleaving the sialic acid moieties on the mucin of the airway epithelial cells. Likely to plays a role in the budding process through its association with lipid rafts during intracellular transport. May additionally display a raft-association independent effect on budding. Plays a role in the determination of host range restriction on replication and virulence. Sialidase activity in late endosome/lysosome traffic seems to enhance virus replication.</text>
</comment>
<comment type="catalytic activity">
    <reaction evidence="1">
        <text>Hydrolysis of alpha-(2-&gt;3)-, alpha-(2-&gt;6)-, alpha-(2-&gt;8)- glycosidic linkages of terminal sialic acid residues in oligosaccharides, glycoproteins, glycolipids, colominic acid and synthetic substrates.</text>
        <dbReference type="EC" id="3.2.1.18"/>
    </reaction>
</comment>
<comment type="cofactor">
    <cofactor evidence="1">
        <name>Ca(2+)</name>
        <dbReference type="ChEBI" id="CHEBI:29108"/>
    </cofactor>
</comment>
<comment type="activity regulation">
    <text evidence="1">Inhibited by the neuraminidase inhibitors zanamivir (Relenza) and oseltamivir (Tamiflu). These drugs interfere with the release of progeny virus from infected cells and are effective against all influenza strains. Resistance to neuraminidase inhibitors is quite rare.</text>
</comment>
<comment type="subunit">
    <text evidence="1">Homotetramer.</text>
</comment>
<comment type="subcellular location">
    <subcellularLocation>
        <location evidence="1">Virion membrane</location>
    </subcellularLocation>
    <subcellularLocation>
        <location evidence="1">Host apical cell membrane</location>
        <topology evidence="1">Single-pass type II membrane protein</topology>
    </subcellularLocation>
    <text evidence="1">Preferentially accumulates at the apical plasma membrane in infected polarized epithelial cells, which is the virus assembly site. Uses lipid rafts for cell surface transport and apical sorting. In the virion, forms a mushroom-shaped spike on the surface of the membrane.</text>
</comment>
<comment type="domain">
    <text evidence="1">Intact N-terminus is essential for virion morphogenesis. Possesses two apical sorting signals, one in the ectodomain, which is likely to be a glycan, and the other in the transmembrane domain. The transmembrane domain also plays a role in lipid raft association.</text>
</comment>
<comment type="PTM">
    <text evidence="1">N-glycosylated.</text>
</comment>
<comment type="miscellaneous">
    <text>The influenza A genome consist of 8 RNA segments. Genetic variation of hemagglutinin and/or neuraminidase genes results in the emergence of new influenza strains. The mechanism of variation can be the result of point mutations or the result of genetic reassortment between segments of two different strains.</text>
</comment>
<comment type="similarity">
    <text evidence="1">Belongs to the glycosyl hydrolase 34 family.</text>
</comment>
<name>NRAM_I76AK</name>
<organismHost>
    <name type="scientific">Aves</name>
    <dbReference type="NCBI Taxonomy" id="8782"/>
</organismHost>
<organismHost>
    <name type="scientific">Sus scrofa</name>
    <name type="common">Pig</name>
    <dbReference type="NCBI Taxonomy" id="9823"/>
</organismHost>
<gene>
    <name evidence="1" type="primary">NA</name>
</gene>
<proteinExistence type="inferred from homology"/>
<organism>
    <name type="scientific">Influenza A virus (strain A/Duck/New Zealand/31/1976 H4N6)</name>
    <dbReference type="NCBI Taxonomy" id="385592"/>
    <lineage>
        <taxon>Viruses</taxon>
        <taxon>Riboviria</taxon>
        <taxon>Orthornavirae</taxon>
        <taxon>Negarnaviricota</taxon>
        <taxon>Polyploviricotina</taxon>
        <taxon>Insthoviricetes</taxon>
        <taxon>Articulavirales</taxon>
        <taxon>Orthomyxoviridae</taxon>
        <taxon>Alphainfluenzavirus</taxon>
        <taxon>Alphainfluenzavirus influenzae</taxon>
        <taxon>Influenza A virus</taxon>
    </lineage>
</organism>